<protein>
    <recommendedName>
        <fullName>Probable 1,4-beta-D-glucan cellobiohydrolase C</fullName>
        <ecNumber>3.2.1.91</ecNumber>
    </recommendedName>
    <alternativeName>
        <fullName>Beta-glucancellobiohydrolase C</fullName>
    </alternativeName>
    <alternativeName>
        <fullName>Exocellobiohydrolase C</fullName>
    </alternativeName>
    <alternativeName>
        <fullName>Exoglucanase C</fullName>
    </alternativeName>
</protein>
<evidence type="ECO:0000250" key="1"/>
<evidence type="ECO:0000255" key="2"/>
<evidence type="ECO:0000255" key="3">
    <source>
        <dbReference type="PROSITE-ProRule" id="PRU00597"/>
    </source>
</evidence>
<evidence type="ECO:0000255" key="4">
    <source>
        <dbReference type="PROSITE-ProRule" id="PRU10056"/>
    </source>
</evidence>
<evidence type="ECO:0000255" key="5">
    <source>
        <dbReference type="PROSITE-ProRule" id="PRU10057"/>
    </source>
</evidence>
<evidence type="ECO:0000256" key="6">
    <source>
        <dbReference type="SAM" id="MobiDB-lite"/>
    </source>
</evidence>
<evidence type="ECO:0000305" key="7"/>
<comment type="function">
    <text evidence="1">The biological conversion of cellulose to glucose generally requires three types of hydrolytic enzymes: (1) Endoglucanases which cut internal beta-1,4-glucosidic bonds; (2) Exocellobiohydrolases that cut the disaccharide cellobiose from the non-reducing end of the cellulose polymer chain; (3) Beta-1,4-glucosidases which hydrolyze the cellobiose and other short cello-oligosaccharides to glucose.</text>
</comment>
<comment type="catalytic activity">
    <reaction>
        <text>Hydrolysis of (1-&gt;4)-beta-D-glucosidic linkages in cellulose and cellotetraose, releasing cellobiose from the non-reducing ends of the chains.</text>
        <dbReference type="EC" id="3.2.1.91"/>
    </reaction>
</comment>
<comment type="subcellular location">
    <subcellularLocation>
        <location evidence="1">Secreted</location>
    </subcellularLocation>
</comment>
<comment type="domain">
    <text>Has a modular structure: a carbohydrate-binding module (CBM) at the N-terminus, a linker rich in threonines, and a C-terminal exocellobiohydrolase catalytic module. The genes for catalytic modules and CBMs seem to have evolved separately and have been linked by gene fusion.</text>
</comment>
<comment type="similarity">
    <text evidence="7">Belongs to the glycosyl hydrolase 6 (cellulase B) family.</text>
</comment>
<keyword id="KW-0119">Carbohydrate metabolism</keyword>
<keyword id="KW-0136">Cellulose degradation</keyword>
<keyword id="KW-1015">Disulfide bond</keyword>
<keyword id="KW-0326">Glycosidase</keyword>
<keyword id="KW-0378">Hydrolase</keyword>
<keyword id="KW-0624">Polysaccharide degradation</keyword>
<keyword id="KW-1185">Reference proteome</keyword>
<keyword id="KW-0964">Secreted</keyword>
<keyword id="KW-0732">Signal</keyword>
<feature type="signal peptide" evidence="2">
    <location>
        <begin position="1"/>
        <end position="18"/>
    </location>
</feature>
<feature type="chain" id="PRO_0000394052" description="Probable 1,4-beta-D-glucan cellobiohydrolase C">
    <location>
        <begin position="19"/>
        <end position="468"/>
    </location>
</feature>
<feature type="domain" description="CBM1" evidence="3">
    <location>
        <begin position="19"/>
        <end position="54"/>
    </location>
</feature>
<feature type="region of interest" description="Thr-rich linker">
    <location>
        <begin position="57"/>
        <end position="106"/>
    </location>
</feature>
<feature type="region of interest" description="Disordered" evidence="6">
    <location>
        <begin position="68"/>
        <end position="107"/>
    </location>
</feature>
<feature type="region of interest" description="Catalytic">
    <location>
        <begin position="107"/>
        <end position="468"/>
    </location>
</feature>
<feature type="active site" evidence="4">
    <location>
        <position position="198"/>
    </location>
</feature>
<feature type="active site" description="Proton donor" evidence="5">
    <location>
        <position position="244"/>
    </location>
</feature>
<feature type="active site" description="Nucleophile" evidence="4">
    <location>
        <position position="423"/>
    </location>
</feature>
<feature type="disulfide bond" evidence="1">
    <location>
        <begin position="26"/>
        <end position="43"/>
    </location>
</feature>
<feature type="disulfide bond" evidence="1">
    <location>
        <begin position="37"/>
        <end position="53"/>
    </location>
</feature>
<feature type="disulfide bond" evidence="1">
    <location>
        <begin position="199"/>
        <end position="258"/>
    </location>
</feature>
<feature type="disulfide bond" evidence="1">
    <location>
        <begin position="390"/>
        <end position="437"/>
    </location>
</feature>
<gene>
    <name type="primary">cbhC</name>
    <name type="ORF">ATEG_07493</name>
</gene>
<reference key="1">
    <citation type="submission" date="2005-09" db="EMBL/GenBank/DDBJ databases">
        <title>Annotation of the Aspergillus terreus NIH2624 genome.</title>
        <authorList>
            <person name="Birren B.W."/>
            <person name="Lander E.S."/>
            <person name="Galagan J.E."/>
            <person name="Nusbaum C."/>
            <person name="Devon K."/>
            <person name="Henn M."/>
            <person name="Ma L.-J."/>
            <person name="Jaffe D.B."/>
            <person name="Butler J."/>
            <person name="Alvarez P."/>
            <person name="Gnerre S."/>
            <person name="Grabherr M."/>
            <person name="Kleber M."/>
            <person name="Mauceli E.W."/>
            <person name="Brockman W."/>
            <person name="Rounsley S."/>
            <person name="Young S.K."/>
            <person name="LaButti K."/>
            <person name="Pushparaj V."/>
            <person name="DeCaprio D."/>
            <person name="Crawford M."/>
            <person name="Koehrsen M."/>
            <person name="Engels R."/>
            <person name="Montgomery P."/>
            <person name="Pearson M."/>
            <person name="Howarth C."/>
            <person name="Larson L."/>
            <person name="Luoma S."/>
            <person name="White J."/>
            <person name="Alvarado L."/>
            <person name="Kodira C.D."/>
            <person name="Zeng Q."/>
            <person name="Oleary S."/>
            <person name="Yandava C."/>
            <person name="Denning D.W."/>
            <person name="Nierman W.C."/>
            <person name="Milne T."/>
            <person name="Madden K."/>
        </authorList>
    </citation>
    <scope>NUCLEOTIDE SEQUENCE [LARGE SCALE GENOMIC DNA]</scope>
    <source>
        <strain>NIH 2624 / FGSC A1156</strain>
    </source>
</reference>
<dbReference type="EC" id="3.2.1.91"/>
<dbReference type="EMBL" id="CH476604">
    <property type="protein sequence ID" value="EAU31755.1"/>
    <property type="molecule type" value="Genomic_DNA"/>
</dbReference>
<dbReference type="RefSeq" id="XP_001216114.1">
    <property type="nucleotide sequence ID" value="XM_001216114.1"/>
</dbReference>
<dbReference type="SMR" id="Q0CFP1"/>
<dbReference type="STRING" id="341663.Q0CFP1"/>
<dbReference type="EnsemblFungi" id="EAU31755">
    <property type="protein sequence ID" value="EAU31755"/>
    <property type="gene ID" value="ATEG_07493"/>
</dbReference>
<dbReference type="GeneID" id="4322742"/>
<dbReference type="VEuPathDB" id="FungiDB:ATEG_07493"/>
<dbReference type="eggNOG" id="ENOG502QWHE">
    <property type="taxonomic scope" value="Eukaryota"/>
</dbReference>
<dbReference type="HOGENOM" id="CLU_015488_0_0_1"/>
<dbReference type="OMA" id="EVHTLAM"/>
<dbReference type="OrthoDB" id="64893at2759"/>
<dbReference type="Proteomes" id="UP000007963">
    <property type="component" value="Unassembled WGS sequence"/>
</dbReference>
<dbReference type="GO" id="GO:0005576">
    <property type="term" value="C:extracellular region"/>
    <property type="evidence" value="ECO:0007669"/>
    <property type="project" value="UniProtKB-SubCell"/>
</dbReference>
<dbReference type="GO" id="GO:0016162">
    <property type="term" value="F:cellulose 1,4-beta-cellobiosidase activity"/>
    <property type="evidence" value="ECO:0007669"/>
    <property type="project" value="UniProtKB-EC"/>
</dbReference>
<dbReference type="GO" id="GO:0030248">
    <property type="term" value="F:cellulose binding"/>
    <property type="evidence" value="ECO:0007669"/>
    <property type="project" value="InterPro"/>
</dbReference>
<dbReference type="GO" id="GO:0030245">
    <property type="term" value="P:cellulose catabolic process"/>
    <property type="evidence" value="ECO:0007669"/>
    <property type="project" value="UniProtKB-KW"/>
</dbReference>
<dbReference type="FunFam" id="3.20.20.40:FF:000001">
    <property type="entry name" value="Glucanase"/>
    <property type="match status" value="1"/>
</dbReference>
<dbReference type="Gene3D" id="3.20.20.40">
    <property type="entry name" value="1, 4-beta cellobiohydrolase"/>
    <property type="match status" value="1"/>
</dbReference>
<dbReference type="InterPro" id="IPR016288">
    <property type="entry name" value="Beta_cellobiohydrolase"/>
</dbReference>
<dbReference type="InterPro" id="IPR036434">
    <property type="entry name" value="Beta_cellobiohydrolase_sf"/>
</dbReference>
<dbReference type="InterPro" id="IPR035971">
    <property type="entry name" value="CBD_sf"/>
</dbReference>
<dbReference type="InterPro" id="IPR000254">
    <property type="entry name" value="Cellulose-bd_dom_fun"/>
</dbReference>
<dbReference type="InterPro" id="IPR001524">
    <property type="entry name" value="Glyco_hydro_6_CS"/>
</dbReference>
<dbReference type="PANTHER" id="PTHR34876">
    <property type="match status" value="1"/>
</dbReference>
<dbReference type="PANTHER" id="PTHR34876:SF4">
    <property type="entry name" value="1,4-BETA-D-GLUCAN CELLOBIOHYDROLASE C-RELATED"/>
    <property type="match status" value="1"/>
</dbReference>
<dbReference type="Pfam" id="PF00734">
    <property type="entry name" value="CBM_1"/>
    <property type="match status" value="1"/>
</dbReference>
<dbReference type="Pfam" id="PF01341">
    <property type="entry name" value="Glyco_hydro_6"/>
    <property type="match status" value="1"/>
</dbReference>
<dbReference type="PIRSF" id="PIRSF001100">
    <property type="entry name" value="Beta_cellobiohydrolase"/>
    <property type="match status" value="1"/>
</dbReference>
<dbReference type="PRINTS" id="PR00733">
    <property type="entry name" value="GLHYDRLASE6"/>
</dbReference>
<dbReference type="SMART" id="SM00236">
    <property type="entry name" value="fCBD"/>
    <property type="match status" value="1"/>
</dbReference>
<dbReference type="SUPFAM" id="SSF57180">
    <property type="entry name" value="Cellulose-binding domain"/>
    <property type="match status" value="1"/>
</dbReference>
<dbReference type="SUPFAM" id="SSF51989">
    <property type="entry name" value="Glycosyl hydrolases family 6, cellulases"/>
    <property type="match status" value="1"/>
</dbReference>
<dbReference type="PROSITE" id="PS00562">
    <property type="entry name" value="CBM1_1"/>
    <property type="match status" value="1"/>
</dbReference>
<dbReference type="PROSITE" id="PS51164">
    <property type="entry name" value="CBM1_2"/>
    <property type="match status" value="1"/>
</dbReference>
<dbReference type="PROSITE" id="PS00655">
    <property type="entry name" value="GLYCOSYL_HYDROL_F6_1"/>
    <property type="match status" value="1"/>
</dbReference>
<dbReference type="PROSITE" id="PS00656">
    <property type="entry name" value="GLYCOSYL_HYDROL_F6_2"/>
    <property type="match status" value="1"/>
</dbReference>
<organism>
    <name type="scientific">Aspergillus terreus (strain NIH 2624 / FGSC A1156)</name>
    <dbReference type="NCBI Taxonomy" id="341663"/>
    <lineage>
        <taxon>Eukaryota</taxon>
        <taxon>Fungi</taxon>
        <taxon>Dikarya</taxon>
        <taxon>Ascomycota</taxon>
        <taxon>Pezizomycotina</taxon>
        <taxon>Eurotiomycetes</taxon>
        <taxon>Eurotiomycetidae</taxon>
        <taxon>Eurotiales</taxon>
        <taxon>Aspergillaceae</taxon>
        <taxon>Aspergillus</taxon>
        <taxon>Aspergillus subgen. Circumdati</taxon>
    </lineage>
</organism>
<proteinExistence type="inferred from homology"/>
<name>CBHC_ASPTN</name>
<accession>Q0CFP1</accession>
<sequence length="468" mass="48846">MGRVSSLALALLLPAVQAQQTLWGQCGGIGWTGPTNCVAGAACSTQNPYYAQCLPGTATTSTTLTTTTRVTTTTTSTTSKSSSTGSTTTTKSTGTTTTSGSSTTITSAPSGNPFSGYQLYANPYYSSEVHTLAMPSLASSLLPAASAAAKVPSFTWLDTAAKVPTMGTYLADIKAKNAAGANPPIAAQFVVYDLPDRDCAALASNGEYSIANGGVANYKKYIDAIRAQLLNYPDVHTILVIEPDSLANLVTNLNVAKCANAQSAYLECVNYALIQLNLPNVAMYIDAGHAGWLGWPANIGPAAQLFAGVYKDAGAPAALRGLATNVANYNAFSISTCPSYTSGDANCDENRYINAIAPLLKDQGWDAHFIVDTGRNGVQPTKQNAWGDWCNVIGTGFGVRPTTNTGNSLVDAFVWVKPGGESDGTSDSSSARYDAHCGYSDALQPAPEAGTWFQAYFEQLLKNANPAF</sequence>